<comment type="function">
    <text evidence="4">Putative pheromone receptor implicated in the regulation of social and reproductive behavior.</text>
</comment>
<comment type="subcellular location">
    <subcellularLocation>
        <location evidence="5">Cell membrane</location>
        <topology evidence="1">Multi-pass membrane protein</topology>
    </subcellularLocation>
</comment>
<comment type="tissue specificity">
    <text evidence="3">Expressed in a subset of sensory neurons located in the apical layer of the vomeronasal organ.</text>
</comment>
<comment type="disruption phenotype">
    <text evidence="4">Mice lacking all but one V1ra and V1rb gene (12% of the V1r repertoire) show a lack of chemosensory response to a subset of known pheromonal ligands and changes in maternal aggression as well as male reproductive behavior.</text>
</comment>
<comment type="similarity">
    <text evidence="2">Belongs to the G-protein coupled receptor 1 family.</text>
</comment>
<keyword id="KW-1003">Cell membrane</keyword>
<keyword id="KW-1015">Disulfide bond</keyword>
<keyword id="KW-0297">G-protein coupled receptor</keyword>
<keyword id="KW-0325">Glycoprotein</keyword>
<keyword id="KW-0472">Membrane</keyword>
<keyword id="KW-0589">Pheromone response</keyword>
<keyword id="KW-0675">Receptor</keyword>
<keyword id="KW-1185">Reference proteome</keyword>
<keyword id="KW-0807">Transducer</keyword>
<keyword id="KW-0812">Transmembrane</keyword>
<keyword id="KW-1133">Transmembrane helix</keyword>
<dbReference type="EMBL" id="AF291487">
    <property type="protein sequence ID" value="AAG42081.1"/>
    <property type="molecule type" value="Genomic_DNA"/>
</dbReference>
<dbReference type="EMBL" id="BC138392">
    <property type="protein sequence ID" value="AAI38393.1"/>
    <property type="molecule type" value="mRNA"/>
</dbReference>
<dbReference type="EMBL" id="BC138394">
    <property type="protein sequence ID" value="AAI38395.1"/>
    <property type="molecule type" value="mRNA"/>
</dbReference>
<dbReference type="CCDS" id="CCDS20354.1"/>
<dbReference type="RefSeq" id="NP_444453.1">
    <property type="nucleotide sequence ID" value="NM_053223.1"/>
</dbReference>
<dbReference type="SMR" id="Q9EQ48"/>
<dbReference type="GlyCosmos" id="Q9EQ48">
    <property type="glycosylation" value="1 site, No reported glycans"/>
</dbReference>
<dbReference type="GlyGen" id="Q9EQ48">
    <property type="glycosylation" value="1 site"/>
</dbReference>
<dbReference type="PaxDb" id="10090-ENSMUSP00000077479"/>
<dbReference type="DNASU" id="113850"/>
<dbReference type="Ensembl" id="ENSMUST00000078371.6">
    <property type="protein sequence ID" value="ENSMUSP00000077479.5"/>
    <property type="gene ID" value="ENSMUSG00000062546.6"/>
</dbReference>
<dbReference type="GeneID" id="113850"/>
<dbReference type="KEGG" id="mmu:113850"/>
<dbReference type="UCSC" id="uc009cwx.1">
    <property type="organism name" value="mouse"/>
</dbReference>
<dbReference type="AGR" id="MGI:2148513"/>
<dbReference type="CTD" id="113850"/>
<dbReference type="MGI" id="MGI:2148513">
    <property type="gene designation" value="V1ra8"/>
</dbReference>
<dbReference type="VEuPathDB" id="HostDB:ENSMUSG00000062546"/>
<dbReference type="eggNOG" id="ENOG502SNRJ">
    <property type="taxonomic scope" value="Eukaryota"/>
</dbReference>
<dbReference type="GeneTree" id="ENSGT01030000234553"/>
<dbReference type="HOGENOM" id="CLU_058641_0_0_1"/>
<dbReference type="InParanoid" id="Q9EQ48"/>
<dbReference type="OMA" id="MITIFKC"/>
<dbReference type="OrthoDB" id="9634176at2759"/>
<dbReference type="PhylomeDB" id="Q9EQ48"/>
<dbReference type="BioGRID-ORCS" id="113850">
    <property type="hits" value="3 hits in 41 CRISPR screens"/>
</dbReference>
<dbReference type="PRO" id="PR:Q9EQ48"/>
<dbReference type="Proteomes" id="UP000000589">
    <property type="component" value="Chromosome 6"/>
</dbReference>
<dbReference type="RNAct" id="Q9EQ48">
    <property type="molecule type" value="protein"/>
</dbReference>
<dbReference type="Bgee" id="ENSMUSG00000062546">
    <property type="expression patterns" value="Expressed in uterus"/>
</dbReference>
<dbReference type="GO" id="GO:0005886">
    <property type="term" value="C:plasma membrane"/>
    <property type="evidence" value="ECO:0007669"/>
    <property type="project" value="UniProtKB-SubCell"/>
</dbReference>
<dbReference type="GO" id="GO:0016503">
    <property type="term" value="F:pheromone receptor activity"/>
    <property type="evidence" value="ECO:0007669"/>
    <property type="project" value="InterPro"/>
</dbReference>
<dbReference type="GO" id="GO:0019236">
    <property type="term" value="P:response to pheromone"/>
    <property type="evidence" value="ECO:0007669"/>
    <property type="project" value="UniProtKB-KW"/>
</dbReference>
<dbReference type="GO" id="GO:0007606">
    <property type="term" value="P:sensory perception of chemical stimulus"/>
    <property type="evidence" value="ECO:0000304"/>
    <property type="project" value="MGI"/>
</dbReference>
<dbReference type="CDD" id="cd13949">
    <property type="entry name" value="7tm_V1R_pheromone"/>
    <property type="match status" value="1"/>
</dbReference>
<dbReference type="FunFam" id="1.20.1070.10:FF:000051">
    <property type="entry name" value="Vomeronasal type-1 receptor"/>
    <property type="match status" value="1"/>
</dbReference>
<dbReference type="Gene3D" id="1.20.1070.10">
    <property type="entry name" value="Rhodopsin 7-helix transmembrane proteins"/>
    <property type="match status" value="1"/>
</dbReference>
<dbReference type="InterPro" id="IPR017452">
    <property type="entry name" value="GPCR_Rhodpsn_7TM"/>
</dbReference>
<dbReference type="InterPro" id="IPR004072">
    <property type="entry name" value="Vmron_rcpt_1"/>
</dbReference>
<dbReference type="PANTHER" id="PTHR24062">
    <property type="entry name" value="VOMERONASAL TYPE-1 RECEPTOR"/>
    <property type="match status" value="1"/>
</dbReference>
<dbReference type="Pfam" id="PF03402">
    <property type="entry name" value="V1R"/>
    <property type="match status" value="1"/>
</dbReference>
<dbReference type="PRINTS" id="PR01534">
    <property type="entry name" value="VOMERONASL1R"/>
</dbReference>
<dbReference type="SUPFAM" id="SSF81321">
    <property type="entry name" value="Family A G protein-coupled receptor-like"/>
    <property type="match status" value="1"/>
</dbReference>
<dbReference type="PROSITE" id="PS50262">
    <property type="entry name" value="G_PROTEIN_RECEP_F1_2"/>
    <property type="match status" value="1"/>
</dbReference>
<sequence>MNKDHTLYCSVYIRNAFFSEIGIGISANSCLLLFHTFMFIRGHRPRLTDLPIGFVALIHLVMLLLAAYITEDFFMSSGGWDDITCKLVIFLHRFFRSLSVCATCLLSVFQAIILCPQSSHLAKLKQNSPHQLSYFFIFLSIFYTSISSQILIAAIPTQNITFVNLIYITNSCSFLPLSSSMQHTFSTLLTFRNVFVIGLMGLSTCYMATLLCRHKTRSQRLQNSKLSPKATPEQRALRTILMLMSFFLLMSTFDSIISYSRTIITGKSTALLCPDSCRS</sequence>
<name>VN1A8_MOUSE</name>
<accession>Q9EQ48</accession>
<accession>B9EHS8</accession>
<protein>
    <recommendedName>
        <fullName>Vomeronasal type-1 receptor A8</fullName>
    </recommendedName>
</protein>
<feature type="chain" id="PRO_0000239964" description="Vomeronasal type-1 receptor A8">
    <location>
        <begin position="1"/>
        <end position="279"/>
    </location>
</feature>
<feature type="topological domain" description="Extracellular" evidence="1">
    <location>
        <begin position="1"/>
        <end position="19"/>
    </location>
</feature>
<feature type="transmembrane region" description="Helical; Name=1" evidence="1">
    <location>
        <begin position="20"/>
        <end position="40"/>
    </location>
</feature>
<feature type="topological domain" description="Cytoplasmic" evidence="1">
    <location>
        <begin position="41"/>
        <end position="49"/>
    </location>
</feature>
<feature type="transmembrane region" description="Helical; Name=2" evidence="1">
    <location>
        <begin position="50"/>
        <end position="70"/>
    </location>
</feature>
<feature type="topological domain" description="Extracellular" evidence="1">
    <location>
        <begin position="71"/>
        <end position="93"/>
    </location>
</feature>
<feature type="transmembrane region" description="Helical; Name=3" evidence="1">
    <location>
        <begin position="94"/>
        <end position="114"/>
    </location>
</feature>
<feature type="topological domain" description="Cytoplasmic" evidence="1">
    <location>
        <begin position="115"/>
        <end position="134"/>
    </location>
</feature>
<feature type="transmembrane region" description="Helical; Name=4" evidence="1">
    <location>
        <begin position="135"/>
        <end position="155"/>
    </location>
</feature>
<feature type="topological domain" description="Extracellular" evidence="1">
    <location>
        <begin position="156"/>
        <end position="159"/>
    </location>
</feature>
<feature type="transmembrane region" description="Helical; Name=5" evidence="1">
    <location>
        <begin position="160"/>
        <end position="180"/>
    </location>
</feature>
<feature type="topological domain" description="Cytoplasmic" evidence="1">
    <location>
        <begin position="181"/>
        <end position="187"/>
    </location>
</feature>
<feature type="transmembrane region" description="Helical; Name=6" evidence="1">
    <location>
        <begin position="188"/>
        <end position="208"/>
    </location>
</feature>
<feature type="topological domain" description="Extracellular" evidence="1">
    <location>
        <begin position="209"/>
        <end position="238"/>
    </location>
</feature>
<feature type="transmembrane region" description="Helical; Name=7" evidence="1">
    <location>
        <begin position="239"/>
        <end position="259"/>
    </location>
</feature>
<feature type="topological domain" description="Cytoplasmic" evidence="1">
    <location>
        <begin position="260"/>
        <end position="279"/>
    </location>
</feature>
<feature type="glycosylation site" description="N-linked (GlcNAc...) asparagine" evidence="1">
    <location>
        <position position="159"/>
    </location>
</feature>
<feature type="disulfide bond" evidence="2">
    <location>
        <begin position="85"/>
        <end position="172"/>
    </location>
</feature>
<evidence type="ECO:0000255" key="1"/>
<evidence type="ECO:0000255" key="2">
    <source>
        <dbReference type="PROSITE-ProRule" id="PRU00521"/>
    </source>
</evidence>
<evidence type="ECO:0000269" key="3">
    <source>
    </source>
</evidence>
<evidence type="ECO:0000269" key="4">
    <source>
    </source>
</evidence>
<evidence type="ECO:0000305" key="5"/>
<evidence type="ECO:0000312" key="6">
    <source>
        <dbReference type="EMBL" id="AAG42081.1"/>
    </source>
</evidence>
<reference evidence="6" key="1">
    <citation type="journal article" date="2000" name="Genome Res.">
        <title>Sequence diversity and genomic organization of vomeronasal receptor genes in the mouse.</title>
        <authorList>
            <person name="Del Punta K."/>
            <person name="Rothman A."/>
            <person name="Rodriguez I."/>
            <person name="Mombaerts P."/>
        </authorList>
    </citation>
    <scope>NUCLEOTIDE SEQUENCE [GENOMIC DNA]</scope>
    <source>
        <strain evidence="6">129/SvJ</strain>
    </source>
</reference>
<reference key="2">
    <citation type="journal article" date="2004" name="Genome Res.">
        <title>The status, quality, and expansion of the NIH full-length cDNA project: the Mammalian Gene Collection (MGC).</title>
        <authorList>
            <consortium name="The MGC Project Team"/>
        </authorList>
    </citation>
    <scope>NUCLEOTIDE SEQUENCE [LARGE SCALE MRNA]</scope>
    <source>
        <tissue>Brain</tissue>
    </source>
</reference>
<reference evidence="5" key="3">
    <citation type="journal article" date="2002" name="Nature">
        <title>Deficient pheromone responses in mice lacking a cluster of vomeronasal receptor genes.</title>
        <authorList>
            <person name="Del Punta K."/>
            <person name="Leinders-Zufall T."/>
            <person name="Rodriguez I."/>
            <person name="Jukam D."/>
            <person name="Wysocki C.J."/>
            <person name="Ogawa S."/>
            <person name="Zufall F."/>
            <person name="Mombaerts P."/>
        </authorList>
    </citation>
    <scope>PUTATIVE FUNCTION</scope>
    <scope>DISRUPTION PHENOTYPE</scope>
</reference>
<reference evidence="5" key="4">
    <citation type="journal article" date="2002" name="Nat. Neurosci.">
        <title>Multiple new and isolated families within the mouse superfamily of V1r vomeronasal receptors.</title>
        <authorList>
            <person name="Rodriguez I."/>
            <person name="Del Punta K."/>
            <person name="Rothman A."/>
            <person name="Ishii T."/>
            <person name="Mombaerts P."/>
        </authorList>
    </citation>
    <scope>TISSUE SPECIFICITY</scope>
</reference>
<gene>
    <name evidence="6" type="primary">V1ra8</name>
</gene>
<organism>
    <name type="scientific">Mus musculus</name>
    <name type="common">Mouse</name>
    <dbReference type="NCBI Taxonomy" id="10090"/>
    <lineage>
        <taxon>Eukaryota</taxon>
        <taxon>Metazoa</taxon>
        <taxon>Chordata</taxon>
        <taxon>Craniata</taxon>
        <taxon>Vertebrata</taxon>
        <taxon>Euteleostomi</taxon>
        <taxon>Mammalia</taxon>
        <taxon>Eutheria</taxon>
        <taxon>Euarchontoglires</taxon>
        <taxon>Glires</taxon>
        <taxon>Rodentia</taxon>
        <taxon>Myomorpha</taxon>
        <taxon>Muroidea</taxon>
        <taxon>Muridae</taxon>
        <taxon>Murinae</taxon>
        <taxon>Mus</taxon>
        <taxon>Mus</taxon>
    </lineage>
</organism>
<proteinExistence type="evidence at transcript level"/>